<dbReference type="EMBL" id="AF076643">
    <property type="protein sequence ID" value="AAD42929.1"/>
    <property type="molecule type" value="mRNA"/>
</dbReference>
<dbReference type="SMR" id="Q9XT80"/>
<dbReference type="FunCoup" id="Q9XT80">
    <property type="interactions" value="445"/>
</dbReference>
<dbReference type="STRING" id="9749.Q9XT80"/>
<dbReference type="GlyCosmos" id="Q9XT80">
    <property type="glycosylation" value="1 site, No reported glycans"/>
</dbReference>
<dbReference type="InParanoid" id="Q9XT80"/>
<dbReference type="Proteomes" id="UP000248483">
    <property type="component" value="Unplaced"/>
</dbReference>
<dbReference type="GO" id="GO:0005615">
    <property type="term" value="C:extracellular space"/>
    <property type="evidence" value="ECO:0007669"/>
    <property type="project" value="UniProtKB-KW"/>
</dbReference>
<dbReference type="GO" id="GO:0005896">
    <property type="term" value="C:interleukin-6 receptor complex"/>
    <property type="evidence" value="ECO:0007669"/>
    <property type="project" value="TreeGrafter"/>
</dbReference>
<dbReference type="GO" id="GO:0005125">
    <property type="term" value="F:cytokine activity"/>
    <property type="evidence" value="ECO:0007669"/>
    <property type="project" value="UniProtKB-KW"/>
</dbReference>
<dbReference type="GO" id="GO:0008083">
    <property type="term" value="F:growth factor activity"/>
    <property type="evidence" value="ECO:0007669"/>
    <property type="project" value="UniProtKB-KW"/>
</dbReference>
<dbReference type="GO" id="GO:0005138">
    <property type="term" value="F:interleukin-6 receptor binding"/>
    <property type="evidence" value="ECO:0007669"/>
    <property type="project" value="InterPro"/>
</dbReference>
<dbReference type="GO" id="GO:0006953">
    <property type="term" value="P:acute-phase response"/>
    <property type="evidence" value="ECO:0007669"/>
    <property type="project" value="UniProtKB-KW"/>
</dbReference>
<dbReference type="GO" id="GO:0042593">
    <property type="term" value="P:glucose homeostasis"/>
    <property type="evidence" value="ECO:0000250"/>
    <property type="project" value="UniProtKB"/>
</dbReference>
<dbReference type="GO" id="GO:0072574">
    <property type="term" value="P:hepatocyte proliferation"/>
    <property type="evidence" value="ECO:0000250"/>
    <property type="project" value="UniProtKB"/>
</dbReference>
<dbReference type="GO" id="GO:0070102">
    <property type="term" value="P:interleukin-6-mediated signaling pathway"/>
    <property type="evidence" value="ECO:0000250"/>
    <property type="project" value="UniProtKB"/>
</dbReference>
<dbReference type="GO" id="GO:0097421">
    <property type="term" value="P:liver regeneration"/>
    <property type="evidence" value="ECO:0000250"/>
    <property type="project" value="UniProtKB"/>
</dbReference>
<dbReference type="GO" id="GO:0051240">
    <property type="term" value="P:positive regulation of multicellular organismal process"/>
    <property type="evidence" value="ECO:0007669"/>
    <property type="project" value="UniProtKB-ARBA"/>
</dbReference>
<dbReference type="GO" id="GO:0046427">
    <property type="term" value="P:positive regulation of receptor signaling pathway via JAK-STAT"/>
    <property type="evidence" value="ECO:0007669"/>
    <property type="project" value="TreeGrafter"/>
</dbReference>
<dbReference type="GO" id="GO:1904894">
    <property type="term" value="P:positive regulation of receptor signaling pathway via STAT"/>
    <property type="evidence" value="ECO:0000250"/>
    <property type="project" value="UniProtKB"/>
</dbReference>
<dbReference type="GO" id="GO:0070092">
    <property type="term" value="P:regulation of glucagon secretion"/>
    <property type="evidence" value="ECO:0000250"/>
    <property type="project" value="UniProtKB"/>
</dbReference>
<dbReference type="GO" id="GO:0050796">
    <property type="term" value="P:regulation of insulin secretion"/>
    <property type="evidence" value="ECO:0000250"/>
    <property type="project" value="UniProtKB"/>
</dbReference>
<dbReference type="GO" id="GO:0014823">
    <property type="term" value="P:response to activity"/>
    <property type="evidence" value="ECO:0000250"/>
    <property type="project" value="UniProtKB"/>
</dbReference>
<dbReference type="GO" id="GO:0072540">
    <property type="term" value="P:T-helper 17 cell lineage commitment"/>
    <property type="evidence" value="ECO:0000250"/>
    <property type="project" value="UniProtKB"/>
</dbReference>
<dbReference type="GO" id="GO:0010573">
    <property type="term" value="P:vascular endothelial growth factor production"/>
    <property type="evidence" value="ECO:0000250"/>
    <property type="project" value="UniProtKB"/>
</dbReference>
<dbReference type="FunFam" id="1.20.1250.10:FF:000006">
    <property type="entry name" value="Interleukin-6"/>
    <property type="match status" value="1"/>
</dbReference>
<dbReference type="Gene3D" id="1.20.1250.10">
    <property type="match status" value="1"/>
</dbReference>
<dbReference type="InterPro" id="IPR009079">
    <property type="entry name" value="4_helix_cytokine-like_core"/>
</dbReference>
<dbReference type="InterPro" id="IPR003574">
    <property type="entry name" value="IL-6-like"/>
</dbReference>
<dbReference type="InterPro" id="IPR030474">
    <property type="entry name" value="IL-6/GCSF/MGF"/>
</dbReference>
<dbReference type="InterPro" id="IPR030473">
    <property type="entry name" value="IL6/GCSF/MGF_CS"/>
</dbReference>
<dbReference type="PANTHER" id="PTHR48494">
    <property type="entry name" value="INTERLEUKIN-6"/>
    <property type="match status" value="1"/>
</dbReference>
<dbReference type="PANTHER" id="PTHR48494:SF1">
    <property type="entry name" value="INTERLEUKIN-6"/>
    <property type="match status" value="1"/>
</dbReference>
<dbReference type="Pfam" id="PF00489">
    <property type="entry name" value="IL6"/>
    <property type="match status" value="1"/>
</dbReference>
<dbReference type="PIRSF" id="PIRSF001935">
    <property type="entry name" value="IL6_MGF_GCSF"/>
    <property type="match status" value="1"/>
</dbReference>
<dbReference type="PRINTS" id="PR00433">
    <property type="entry name" value="IL6GCSFMGF"/>
</dbReference>
<dbReference type="PRINTS" id="PR00434">
    <property type="entry name" value="INTERLEUKIN6"/>
</dbReference>
<dbReference type="SMART" id="SM00126">
    <property type="entry name" value="IL6"/>
    <property type="match status" value="1"/>
</dbReference>
<dbReference type="SUPFAM" id="SSF47266">
    <property type="entry name" value="4-helical cytokines"/>
    <property type="match status" value="1"/>
</dbReference>
<dbReference type="PROSITE" id="PS00254">
    <property type="entry name" value="INTERLEUKIN_6"/>
    <property type="match status" value="1"/>
</dbReference>
<evidence type="ECO:0000250" key="1"/>
<evidence type="ECO:0000250" key="2">
    <source>
        <dbReference type="UniProtKB" id="P05231"/>
    </source>
</evidence>
<evidence type="ECO:0000250" key="3">
    <source>
        <dbReference type="UniProtKB" id="P08505"/>
    </source>
</evidence>
<evidence type="ECO:0000255" key="4"/>
<evidence type="ECO:0000305" key="5"/>
<accession>Q9XT80</accession>
<protein>
    <recommendedName>
        <fullName>Interleukin-6</fullName>
        <shortName>IL-6</shortName>
    </recommendedName>
</protein>
<name>IL6_DELLE</name>
<sequence>MNSLSTIAFSLGLLLVTATAFPTPGPLGEDFKDDTTSDRLLLTSPDKTEALIKYILGKISAMRKEMCEKYDKCENSKEALAENNLNLPKMAEKDGCFQSGFNQETCLMRITTGLLEYQIYLDYLQNEYEGDKGSIEAVQISIKALAQILRQKVKNPDEVTTPDPTTNASLMNNLQSQNDDWMRNTKIILILRSLENFLQFSLRAVRIK</sequence>
<proteinExistence type="evidence at transcript level"/>
<comment type="function">
    <text evidence="2">Cytokine with a wide variety of biological functions in immunity, tissue regeneration, and metabolism. Binds to IL6R, then the complex associates to the signaling subunit IL6ST/gp130 to trigger the intracellular IL6-signaling pathway. The interaction with the membrane-bound IL6R and IL6ST stimulates 'classic signaling', whereas the binding of IL6 and soluble IL6R to IL6ST stimulates 'trans-signaling'. Alternatively, 'cluster signaling' occurs when membrane-bound IL6:IL6R complexes on transmitter cells activate IL6ST receptors on neighboring receiver cells.</text>
</comment>
<comment type="function">
    <text evidence="2 3">IL6 is a potent inducer of the acute phase response. Rapid production of IL6 contributes to host defense during infection and tissue injury, but excessive IL6 synthesis is involved in disease pathology. In the innate immune response, is synthesized by myeloid cells, such as macrophages and dendritic cells, upon recognition of pathogens through toll-like receptors (TLRs) at the site of infection or tissue injury (By similarity). In the adaptive immune response, is required for the differentiation of B cells into immunoglobulin-secreting cells. Plays a major role in the differentiation of CD4(+) T cell subsets. Essential factor for the development of T follicular helper (Tfh) cells that are required for the induction of germinal-center formation. Required to drive naive CD4(+) T cells to the Th17 lineage. Also required for proliferation of myeloma cells and the survival of plasmablast cells (By similarity).</text>
</comment>
<comment type="function">
    <text evidence="2 3">Acts as an essential factor in bone homeostasis and on vessels directly or indirectly by induction of VEGF, resulting in increased angiogenesis activity and vascular permeability. Induces, through 'trans-signaling' and synergistically with IL1B and TNF, the production of VEGF. Involved in metabolic controls, is discharged into the bloodstream after muscle contraction increasing lipolysis and improving insulin resistance (By similarity). 'Trans-signaling' in central nervous system also regulates energy and glucose homeostasis. Mediates, through GLP-1, crosstalk between insulin-sensitive tissues, intestinal L cells and pancreatic islets to adapt to changes in insulin demand (By similarity). Also acts as a myokine (By similarity). Plays a protective role during liver injury, being required for maintenance of tissue regeneration (By similarity). Also has a pivotal role in iron metabolism by regulating HAMP/hepcidin expression upon inflammation or bacterial infection (By similarity). Through activation of IL6ST-YAP-NOTCH pathway, induces inflammation-induced epithelial regeneration (By similarity).</text>
</comment>
<comment type="subunit">
    <text evidence="2">Component of a hexamer of two molecules each of IL6, IL6R and IL6ST; first binds to IL6R to associate with the signaling subunit IL6ST. Interacts with IL6R (via the N-terminal ectodomain); this interaction may be affected by IL6R-binding with SORL1, hence decreasing IL6 cis signaling. Interacts with SORL1 (via the N-terminal ectodomain); this interaction leads to IL6 internalization and lysosomal degradation. May form a trimeric complex with the soluble SORL1 ectodomain and soluble IL6R receptor; this interaction might stabilize circulating IL6, hence promoting IL6 trans signaling.</text>
</comment>
<comment type="subcellular location">
    <subcellularLocation>
        <location evidence="2">Secreted</location>
    </subcellularLocation>
</comment>
<comment type="similarity">
    <text evidence="5">Belongs to the IL-6 superfamily.</text>
</comment>
<feature type="signal peptide" evidence="4">
    <location>
        <begin position="1"/>
        <end position="20"/>
    </location>
</feature>
<feature type="chain" id="PRO_0000015579" description="Interleukin-6">
    <location>
        <begin position="21"/>
        <end position="208"/>
    </location>
</feature>
<feature type="modified residue" description="Phosphoserine" evidence="2">
    <location>
        <position position="76"/>
    </location>
</feature>
<feature type="glycosylation site" description="N-linked (GlcNAc...) asparagine" evidence="4">
    <location>
        <position position="167"/>
    </location>
</feature>
<feature type="disulfide bond" evidence="1">
    <location>
        <begin position="67"/>
        <end position="73"/>
    </location>
</feature>
<feature type="disulfide bond" evidence="1">
    <location>
        <begin position="96"/>
        <end position="106"/>
    </location>
</feature>
<keyword id="KW-0011">Acute phase</keyword>
<keyword id="KW-0202">Cytokine</keyword>
<keyword id="KW-1015">Disulfide bond</keyword>
<keyword id="KW-0325">Glycoprotein</keyword>
<keyword id="KW-0339">Growth factor</keyword>
<keyword id="KW-0597">Phosphoprotein</keyword>
<keyword id="KW-1185">Reference proteome</keyword>
<keyword id="KW-0964">Secreted</keyword>
<keyword id="KW-0732">Signal</keyword>
<reference key="1">
    <citation type="journal article" date="2000" name="Vet. Immunol. Immunopathol.">
        <title>Molecular cloning, phylogenetic analysis and expression of beluga whale (Delphinapterus leucas) interleukin 6.</title>
        <authorList>
            <person name="St Laurent G."/>
            <person name="Archambault D."/>
        </authorList>
    </citation>
    <scope>NUCLEOTIDE SEQUENCE [MRNA]</scope>
</reference>
<gene>
    <name type="primary">IL6</name>
</gene>
<organism>
    <name type="scientific">Delphinapterus leucas</name>
    <name type="common">Beluga whale</name>
    <dbReference type="NCBI Taxonomy" id="9749"/>
    <lineage>
        <taxon>Eukaryota</taxon>
        <taxon>Metazoa</taxon>
        <taxon>Chordata</taxon>
        <taxon>Craniata</taxon>
        <taxon>Vertebrata</taxon>
        <taxon>Euteleostomi</taxon>
        <taxon>Mammalia</taxon>
        <taxon>Eutheria</taxon>
        <taxon>Laurasiatheria</taxon>
        <taxon>Artiodactyla</taxon>
        <taxon>Whippomorpha</taxon>
        <taxon>Cetacea</taxon>
        <taxon>Odontoceti</taxon>
        <taxon>Monodontidae</taxon>
        <taxon>Delphinapterus</taxon>
    </lineage>
</organism>